<reference key="1">
    <citation type="journal article" date="2009" name="PLoS Biol.">
        <title>Lineage-specific biology revealed by a finished genome assembly of the mouse.</title>
        <authorList>
            <person name="Church D.M."/>
            <person name="Goodstadt L."/>
            <person name="Hillier L.W."/>
            <person name="Zody M.C."/>
            <person name="Goldstein S."/>
            <person name="She X."/>
            <person name="Bult C.J."/>
            <person name="Agarwala R."/>
            <person name="Cherry J.L."/>
            <person name="DiCuccio M."/>
            <person name="Hlavina W."/>
            <person name="Kapustin Y."/>
            <person name="Meric P."/>
            <person name="Maglott D."/>
            <person name="Birtle Z."/>
            <person name="Marques A.C."/>
            <person name="Graves T."/>
            <person name="Zhou S."/>
            <person name="Teague B."/>
            <person name="Potamousis K."/>
            <person name="Churas C."/>
            <person name="Place M."/>
            <person name="Herschleb J."/>
            <person name="Runnheim R."/>
            <person name="Forrest D."/>
            <person name="Amos-Landgraf J."/>
            <person name="Schwartz D.C."/>
            <person name="Cheng Z."/>
            <person name="Lindblad-Toh K."/>
            <person name="Eichler E.E."/>
            <person name="Ponting C.P."/>
        </authorList>
    </citation>
    <scope>NUCLEOTIDE SEQUENCE [LARGE SCALE GENOMIC DNA]</scope>
    <source>
        <strain>C57BL/6J</strain>
    </source>
</reference>
<reference key="2">
    <citation type="journal article" date="2015" name="Diabetes">
        <title>Type 2 Diabetes-Associated K+ Channel TALK-1 Modulates beta-Cell Electrical Excitability, Second-Phase Insulin Secretion, and Glucose Homeostasis.</title>
        <authorList>
            <person name="Vierra N.C."/>
            <person name="Dadi P.K."/>
            <person name="Jeong I."/>
            <person name="Dickerson M."/>
            <person name="Powell D.R."/>
            <person name="Jacobson D.A."/>
        </authorList>
    </citation>
    <scope>FUNCTION</scope>
</reference>
<reference key="3">
    <citation type="journal article" date="2017" name="Sci. Signal.">
        <title>TALK-1 channels control beta cell endoplasmic reticulum Ca2+ homeostasis.</title>
        <authorList>
            <person name="Vierra N.C."/>
            <person name="Dadi P.K."/>
            <person name="Milian S.C."/>
            <person name="Dickerson M.T."/>
            <person name="Jordan K.L."/>
            <person name="Gilon P."/>
            <person name="Jacobson D.A."/>
        </authorList>
    </citation>
    <scope>FUNCTION</scope>
    <scope>SUBCELLULAR LOCATION</scope>
</reference>
<reference key="4">
    <citation type="journal article" date="2018" name="Mol. Metab.">
        <title>TALK-1 reduces delta-cell endoplasmic reticulum and cytoplasmic calcium levels limiting somatostatin secretion.</title>
        <authorList>
            <person name="Vierra N.C."/>
            <person name="Dickerson M.T."/>
            <person name="Jordan K.L."/>
            <person name="Dadi P.K."/>
            <person name="Katdare K.A."/>
            <person name="Altman M.K."/>
            <person name="Milian S.C."/>
            <person name="Jacobson D.A."/>
        </authorList>
    </citation>
    <scope>FUNCTION</scope>
    <scope>SUBCELLULAR LOCATION</scope>
    <scope>TISSUE SPECIFICITY</scope>
</reference>
<reference key="5">
    <citation type="journal article" date="2018" name="Sci. Rep.">
        <title>Cytokine-mediated changes in K+ channel activity promotes an adaptive Ca2+ response that sustains beta-cell insulin secretion during inflammation.</title>
        <authorList>
            <person name="Dickerson M.T."/>
            <person name="Bogart A.M."/>
            <person name="Altman M.K."/>
            <person name="Milian S.C."/>
            <person name="Jordan K.L."/>
            <person name="Dadi P.K."/>
            <person name="Jacobson D.A."/>
        </authorList>
    </citation>
    <scope>FUNCTION</scope>
    <scope>INDUCTION</scope>
    <scope>TISSUE SPECIFICITY</scope>
</reference>
<reference key="6">
    <citation type="journal article" date="2024" name="Cell Rep.">
        <title>TALK-1-mediated alterations of beta-cell mitochondrial function and insulin secretion impair glucose homeostasis on a diabetogenic diet.</title>
        <authorList>
            <person name="Graff S.M."/>
            <person name="Nakhe A.Y."/>
            <person name="Dadi P.K."/>
            <person name="Dickerson M.T."/>
            <person name="Dobson J.R."/>
            <person name="Zaborska K.E."/>
            <person name="Ibsen C.E."/>
            <person name="Butterworth R.B."/>
            <person name="Vierra N.C."/>
            <person name="Jacobson D.A."/>
        </authorList>
    </citation>
    <scope>FUNCTION</scope>
    <scope>SUBCELLULAR LOCATION</scope>
    <scope>TISSUE SPECIFICITY</scope>
</reference>
<sequence>MPRAGVCGCWGGQVLPLLLAYICYLLLGATIFQLLEKQAEAQSRDQFQLEKLRFLENYTCLDQQALEQFVQVILEAWVKGVNPKGNSTNPSNWDFGSSFFFAGTVVTTIGYGNLAPSTEAGQVFCVFYALMGIPLNVVFLNHLGTGLRAHLTTLDRWEDHPRHSQLLQVLGLALFLTLGTLVILIFPPMFFSHVEGWSFREGFYFAFITLSTIGFGDYVVGTDPSKHYIAVYRSLAAIWILLGLAWLAVVLSLGSLLLHRCSRLWQLIRGLDLKDGAAPDSEPRSQKIPISA</sequence>
<gene>
    <name evidence="14" type="primary">Kcnk16</name>
</gene>
<comment type="function">
    <text evidence="2 3 5 6 7 8">K(+) channel that conducts voltage-dependent outward rectifying currents upon membrane depolarization. Voltage sensing is coupled to K(+) electrochemical gradient in an 'ion flux gating' mode where outward but not inward ion flow opens the gate (By similarity). Homo- and heterodimerizes to form functional channels with distinct regulatory and gating properties (By similarity). In pancreatic islets, conducts K(+) countercurrents for Ca(2+) release from the endoplasmic reticulum (ER) and regulates the frequency and duration of cytosolic Ca(2+) oscillations coupled to secretion of pancreatic hormones (PubMed:26239056, PubMed:28928238, PubMed:29402588). In pancreatic beta cells, drives ER Ca(2+) efflux, which in turn activates Ca(2+)-dependent plasma membrane K(+) slow currents and cytosolic Ca(2+) influx, overall contributing to synchronous cytosolic Ca(2+) oscillations. Limits glucose-induced cytosolic Ca(2+) oscillations coupled to second-phase INS secretion (PubMed:26239056, PubMed:28928238, PubMed:29348619). Contributes to beta cell adaptation to acute inflammation by maintaining normal cytosolic Ca(2+) levels and INS secretion (PubMed:29348619). May regulate beta cell mitochondrial Ca(2+) levels either indirectly via ER Ca(2+) efflux or directly by hyperpolarizing the mitochondrial membrane potential. Limits mitochondrial Ca(2+) oscillations and ATP production involved in glucose homeostasis upon metabolic stress (PubMed:26239056). In pancreatic delta cells, limits Ca(2+)-induced Ca(2+)-release involved in somatostatin secretion and modulates islet paracrine signaling involved in glucagon secretion (PubMed:29402588). Permeable to other monovalent cations such as Rb(+) and Cs(+) (By similarity).</text>
</comment>
<comment type="catalytic activity">
    <reaction evidence="3">
        <text>K(+)(in) = K(+)(out)</text>
        <dbReference type="Rhea" id="RHEA:29463"/>
        <dbReference type="ChEBI" id="CHEBI:29103"/>
    </reaction>
</comment>
<comment type="catalytic activity">
    <reaction evidence="3">
        <text>Rb(+)(in) = Rb(+)(out)</text>
        <dbReference type="Rhea" id="RHEA:78547"/>
        <dbReference type="ChEBI" id="CHEBI:49847"/>
    </reaction>
</comment>
<comment type="catalytic activity">
    <reaction evidence="2">
        <text>Cs(+)(in) = Cs(+)(out)</text>
        <dbReference type="Rhea" id="RHEA:78555"/>
        <dbReference type="ChEBI" id="CHEBI:49547"/>
    </reaction>
</comment>
<comment type="subunit">
    <text evidence="3">Homodimer; disulfide-linked. Heterodimer with KCNK17 and KCNK5.</text>
</comment>
<comment type="subcellular location">
    <subcellularLocation>
        <location evidence="3">Cell membrane</location>
        <topology evidence="4">Multi-pass membrane protein</topology>
    </subcellularLocation>
    <subcellularLocation>
        <location evidence="6 12">Endoplasmic reticulum membrane</location>
        <topology evidence="4">Multi-pass membrane protein</topology>
    </subcellularLocation>
    <subcellularLocation>
        <location evidence="13">Mitochondrion inner membrane</location>
        <topology evidence="4">Multi-pass membrane protein</topology>
    </subcellularLocation>
</comment>
<comment type="tissue specificity">
    <text evidence="7 8 9">Expressed in pacreatic beta-cells (at protein level). Expressed in pacreatic delta-cells (at protein level).</text>
</comment>
<comment type="induction">
    <text evidence="7">Down-regulated when pancreatic islets are exposed to a cytokine mixture of TNF, IL1B and IFNG.</text>
</comment>
<comment type="domain">
    <text evidence="1">The pore-forming domains 1 and 2 assemble to form a single pore in which M2 and M4 transmembrane helices line the central cavity and M1 and M3 face the lipid bilayer. The transmembrane helices are bridged by the selectivity filters 1 and 2 carrying a signature sequence TxTTxGYGD that coordinate the permeant ions. Up to four ions can simultaneously occupy the selectivity filter and at least two elementary charges must translocate across the filter to convert it into the open conformation.</text>
</comment>
<comment type="similarity">
    <text evidence="11">Belongs to the two pore domain potassium channel (TC 1.A.1.8) family.</text>
</comment>
<protein>
    <recommendedName>
        <fullName>Potassium channel, subfamily K, member 16</fullName>
    </recommendedName>
    <alternativeName>
        <fullName>2P domain potassium channel Talk-1</fullName>
    </alternativeName>
    <alternativeName>
        <fullName>Potassium channel subfamily K member 16</fullName>
    </alternativeName>
    <alternativeName>
        <fullName>TWIK-related alkaline pH-activated K(+) channel 1</fullName>
        <shortName evidence="10">TALK-1</shortName>
    </alternativeName>
</protein>
<evidence type="ECO:0000250" key="1">
    <source>
        <dbReference type="UniProtKB" id="P57789"/>
    </source>
</evidence>
<evidence type="ECO:0000250" key="2">
    <source>
        <dbReference type="UniProtKB" id="Q96T54"/>
    </source>
</evidence>
<evidence type="ECO:0000250" key="3">
    <source>
        <dbReference type="UniProtKB" id="Q96T55"/>
    </source>
</evidence>
<evidence type="ECO:0000255" key="4"/>
<evidence type="ECO:0000269" key="5">
    <source>
    </source>
</evidence>
<evidence type="ECO:0000269" key="6">
    <source>
    </source>
</evidence>
<evidence type="ECO:0000269" key="7">
    <source>
    </source>
</evidence>
<evidence type="ECO:0000269" key="8">
    <source>
    </source>
</evidence>
<evidence type="ECO:0000269" key="9">
    <source>
    </source>
</evidence>
<evidence type="ECO:0000303" key="10">
    <source>
    </source>
</evidence>
<evidence type="ECO:0000305" key="11"/>
<evidence type="ECO:0000305" key="12">
    <source>
    </source>
</evidence>
<evidence type="ECO:0000305" key="13">
    <source>
    </source>
</evidence>
<evidence type="ECO:0000312" key="14">
    <source>
        <dbReference type="MGI" id="MGI:1921821"/>
    </source>
</evidence>
<dbReference type="CCDS" id="CCDS49407.1"/>
<dbReference type="RefSeq" id="NP_083282.1">
    <property type="nucleotide sequence ID" value="NM_029006.2"/>
</dbReference>
<dbReference type="SMR" id="G5E845"/>
<dbReference type="FunCoup" id="G5E845">
    <property type="interactions" value="6"/>
</dbReference>
<dbReference type="STRING" id="10090.ENSMUSP00000024155"/>
<dbReference type="GlyCosmos" id="G5E845">
    <property type="glycosylation" value="1 site, No reported glycans"/>
</dbReference>
<dbReference type="GlyGen" id="G5E845">
    <property type="glycosylation" value="1 site"/>
</dbReference>
<dbReference type="PhosphoSitePlus" id="G5E845"/>
<dbReference type="PaxDb" id="10090-ENSMUSP00000024155"/>
<dbReference type="ABCD" id="G5E845">
    <property type="antibodies" value="1 sequenced antibody"/>
</dbReference>
<dbReference type="Antibodypedia" id="15706">
    <property type="antibodies" value="37 antibodies from 12 providers"/>
</dbReference>
<dbReference type="DNASU" id="74571"/>
<dbReference type="Ensembl" id="ENSMUST00000024155.9">
    <property type="protein sequence ID" value="ENSMUSP00000024155.8"/>
    <property type="gene ID" value="ENSMUSG00000023387.9"/>
</dbReference>
<dbReference type="GeneID" id="74571"/>
<dbReference type="KEGG" id="mmu:74571"/>
<dbReference type="UCSC" id="uc011zgl.1">
    <property type="organism name" value="mouse"/>
</dbReference>
<dbReference type="AGR" id="MGI:1921821"/>
<dbReference type="CTD" id="83795"/>
<dbReference type="MGI" id="MGI:1921821">
    <property type="gene designation" value="Kcnk16"/>
</dbReference>
<dbReference type="VEuPathDB" id="HostDB:ENSMUSG00000023387"/>
<dbReference type="eggNOG" id="KOG1418">
    <property type="taxonomic scope" value="Eukaryota"/>
</dbReference>
<dbReference type="GeneTree" id="ENSGT00940000159813"/>
<dbReference type="HOGENOM" id="CLU_022504_1_0_1"/>
<dbReference type="InParanoid" id="G5E845"/>
<dbReference type="OMA" id="WLALIFN"/>
<dbReference type="OrthoDB" id="297496at2759"/>
<dbReference type="PhylomeDB" id="G5E845"/>
<dbReference type="TreeFam" id="TF313947"/>
<dbReference type="Reactome" id="R-MMU-1299361">
    <property type="pathway name" value="TWIK-related alkaline pH activated K+ channel (TALK)"/>
</dbReference>
<dbReference type="Reactome" id="R-MMU-5576886">
    <property type="pathway name" value="Phase 4 - resting membrane potential"/>
</dbReference>
<dbReference type="BioGRID-ORCS" id="74571">
    <property type="hits" value="2 hits in 74 CRISPR screens"/>
</dbReference>
<dbReference type="Proteomes" id="UP000000589">
    <property type="component" value="Chromosome 14"/>
</dbReference>
<dbReference type="RNAct" id="G5E845">
    <property type="molecule type" value="Protein"/>
</dbReference>
<dbReference type="Bgee" id="ENSMUSG00000023387">
    <property type="expression patterns" value="Expressed in islet of Langerhans and 16 other cell types or tissues"/>
</dbReference>
<dbReference type="ExpressionAtlas" id="G5E845">
    <property type="expression patterns" value="baseline and differential"/>
</dbReference>
<dbReference type="GO" id="GO:0005789">
    <property type="term" value="C:endoplasmic reticulum membrane"/>
    <property type="evidence" value="ECO:0000314"/>
    <property type="project" value="UniProtKB"/>
</dbReference>
<dbReference type="GO" id="GO:0005743">
    <property type="term" value="C:mitochondrial inner membrane"/>
    <property type="evidence" value="ECO:0007669"/>
    <property type="project" value="UniProtKB-SubCell"/>
</dbReference>
<dbReference type="GO" id="GO:0005886">
    <property type="term" value="C:plasma membrane"/>
    <property type="evidence" value="ECO:0007669"/>
    <property type="project" value="UniProtKB-SubCell"/>
</dbReference>
<dbReference type="GO" id="GO:0046872">
    <property type="term" value="F:metal ion binding"/>
    <property type="evidence" value="ECO:0007669"/>
    <property type="project" value="UniProtKB-KW"/>
</dbReference>
<dbReference type="GO" id="GO:0005267">
    <property type="term" value="F:potassium channel activity"/>
    <property type="evidence" value="ECO:0000266"/>
    <property type="project" value="MGI"/>
</dbReference>
<dbReference type="GO" id="GO:0032469">
    <property type="term" value="P:endoplasmic reticulum calcium ion homeostasis"/>
    <property type="evidence" value="ECO:0000315"/>
    <property type="project" value="UniProtKB"/>
</dbReference>
<dbReference type="GO" id="GO:0086011">
    <property type="term" value="P:membrane repolarization during action potential"/>
    <property type="evidence" value="ECO:0000315"/>
    <property type="project" value="UniProtKB"/>
</dbReference>
<dbReference type="GO" id="GO:0006813">
    <property type="term" value="P:potassium ion transport"/>
    <property type="evidence" value="ECO:0000266"/>
    <property type="project" value="MGI"/>
</dbReference>
<dbReference type="GO" id="GO:0070092">
    <property type="term" value="P:regulation of glucagon secretion"/>
    <property type="evidence" value="ECO:0000315"/>
    <property type="project" value="UniProtKB"/>
</dbReference>
<dbReference type="GO" id="GO:0061178">
    <property type="term" value="P:regulation of insulin secretion involved in cellular response to glucose stimulus"/>
    <property type="evidence" value="ECO:0000315"/>
    <property type="project" value="UniProtKB"/>
</dbReference>
<dbReference type="GO" id="GO:0051279">
    <property type="term" value="P:regulation of release of sequestered calcium ion into cytosol"/>
    <property type="evidence" value="ECO:0000315"/>
    <property type="project" value="UniProtKB"/>
</dbReference>
<dbReference type="GO" id="GO:0090273">
    <property type="term" value="P:regulation of somatostatin secretion"/>
    <property type="evidence" value="ECO:0000315"/>
    <property type="project" value="UniProtKB"/>
</dbReference>
<dbReference type="FunFam" id="1.10.287.70:FF:000098">
    <property type="entry name" value="Potassium two pore domain channel subfamily K member 16"/>
    <property type="match status" value="1"/>
</dbReference>
<dbReference type="Gene3D" id="1.10.287.70">
    <property type="match status" value="1"/>
</dbReference>
<dbReference type="InterPro" id="IPR003280">
    <property type="entry name" value="2pore_dom_K_chnl"/>
</dbReference>
<dbReference type="InterPro" id="IPR003092">
    <property type="entry name" value="2pore_dom_K_chnl_TASK"/>
</dbReference>
<dbReference type="InterPro" id="IPR013099">
    <property type="entry name" value="K_chnl_dom"/>
</dbReference>
<dbReference type="PANTHER" id="PTHR11003:SF104">
    <property type="entry name" value="POTASSIUM CHANNEL SUBFAMILY K MEMBER 16"/>
    <property type="match status" value="1"/>
</dbReference>
<dbReference type="PANTHER" id="PTHR11003">
    <property type="entry name" value="POTASSIUM CHANNEL, SUBFAMILY K"/>
    <property type="match status" value="1"/>
</dbReference>
<dbReference type="Pfam" id="PF07885">
    <property type="entry name" value="Ion_trans_2"/>
    <property type="match status" value="2"/>
</dbReference>
<dbReference type="PIRSF" id="PIRSF038061">
    <property type="entry name" value="K_channel_subfamily_K_type"/>
    <property type="match status" value="1"/>
</dbReference>
<dbReference type="PRINTS" id="PR01333">
    <property type="entry name" value="2POREKCHANEL"/>
</dbReference>
<dbReference type="PRINTS" id="PR01095">
    <property type="entry name" value="TASKCHANNEL"/>
</dbReference>
<dbReference type="SUPFAM" id="SSF81324">
    <property type="entry name" value="Voltage-gated potassium channels"/>
    <property type="match status" value="2"/>
</dbReference>
<name>KCNKG_MOUSE</name>
<accession>G5E845</accession>
<feature type="chain" id="PRO_0000461134" description="Potassium channel, subfamily K, member 16">
    <location>
        <begin position="1"/>
        <end position="292"/>
    </location>
</feature>
<feature type="topological domain" description="Cytoplasmic" evidence="4">
    <location>
        <begin position="1"/>
        <end position="13"/>
    </location>
</feature>
<feature type="transmembrane region" description="Helical" evidence="4">
    <location>
        <begin position="14"/>
        <end position="34"/>
    </location>
</feature>
<feature type="intramembrane region" description="Pore-forming; Name=Pore-forming 1" evidence="4">
    <location>
        <begin position="98"/>
        <end position="116"/>
    </location>
</feature>
<feature type="transmembrane region" description="Helical" evidence="4">
    <location>
        <begin position="120"/>
        <end position="140"/>
    </location>
</feature>
<feature type="topological domain" description="Cytoplasmic" evidence="4">
    <location>
        <begin position="141"/>
        <end position="165"/>
    </location>
</feature>
<feature type="transmembrane region" description="Helical" evidence="4">
    <location>
        <begin position="166"/>
        <end position="186"/>
    </location>
</feature>
<feature type="intramembrane region" description="Pore-forming; Name=Pore-forming 2" evidence="4">
    <location>
        <begin position="202"/>
        <end position="221"/>
    </location>
</feature>
<feature type="transmembrane region" description="Helical" evidence="4">
    <location>
        <begin position="238"/>
        <end position="258"/>
    </location>
</feature>
<feature type="topological domain" description="Cytoplasmic" evidence="4">
    <location>
        <begin position="259"/>
        <end position="292"/>
    </location>
</feature>
<feature type="region of interest" description="Selectivity filter 1" evidence="3">
    <location>
        <begin position="108"/>
        <end position="113"/>
    </location>
</feature>
<feature type="region of interest" description="Selectivity filter 2" evidence="3">
    <location>
        <begin position="212"/>
        <end position="217"/>
    </location>
</feature>
<feature type="binding site" evidence="1">
    <location>
        <position position="108"/>
    </location>
    <ligand>
        <name>K(+)</name>
        <dbReference type="ChEBI" id="CHEBI:29103"/>
        <label>1</label>
    </ligand>
</feature>
<feature type="binding site" evidence="1">
    <location>
        <position position="108"/>
    </location>
    <ligand>
        <name>K(+)</name>
        <dbReference type="ChEBI" id="CHEBI:29103"/>
        <label>4</label>
    </ligand>
</feature>
<feature type="binding site" evidence="1">
    <location>
        <position position="109"/>
    </location>
    <ligand>
        <name>K(+)</name>
        <dbReference type="ChEBI" id="CHEBI:29103"/>
        <label>1</label>
    </ligand>
</feature>
<feature type="binding site" evidence="1">
    <location>
        <position position="109"/>
    </location>
    <ligand>
        <name>K(+)</name>
        <dbReference type="ChEBI" id="CHEBI:29103"/>
        <label>2</label>
    </ligand>
</feature>
<feature type="binding site" evidence="1">
    <location>
        <position position="110"/>
    </location>
    <ligand>
        <name>K(+)</name>
        <dbReference type="ChEBI" id="CHEBI:29103"/>
        <label>2</label>
    </ligand>
</feature>
<feature type="binding site" evidence="1">
    <location>
        <position position="110"/>
    </location>
    <ligand>
        <name>K(+)</name>
        <dbReference type="ChEBI" id="CHEBI:29103"/>
        <label>3</label>
    </ligand>
</feature>
<feature type="binding site" evidence="1">
    <location>
        <position position="111"/>
    </location>
    <ligand>
        <name>K(+)</name>
        <dbReference type="ChEBI" id="CHEBI:29103"/>
        <label>3</label>
    </ligand>
</feature>
<feature type="binding site" evidence="1">
    <location>
        <position position="212"/>
    </location>
    <ligand>
        <name>K(+)</name>
        <dbReference type="ChEBI" id="CHEBI:29103"/>
        <label>1</label>
    </ligand>
</feature>
<feature type="binding site" evidence="1">
    <location>
        <position position="212"/>
    </location>
    <ligand>
        <name>K(+)</name>
        <dbReference type="ChEBI" id="CHEBI:29103"/>
        <label>4</label>
    </ligand>
</feature>
<feature type="binding site" evidence="1">
    <location>
        <position position="213"/>
    </location>
    <ligand>
        <name>K(+)</name>
        <dbReference type="ChEBI" id="CHEBI:29103"/>
        <label>1</label>
    </ligand>
</feature>
<feature type="binding site" evidence="1">
    <location>
        <position position="213"/>
    </location>
    <ligand>
        <name>K(+)</name>
        <dbReference type="ChEBI" id="CHEBI:29103"/>
        <label>2</label>
    </ligand>
</feature>
<feature type="binding site" evidence="1">
    <location>
        <position position="214"/>
    </location>
    <ligand>
        <name>K(+)</name>
        <dbReference type="ChEBI" id="CHEBI:29103"/>
        <label>2</label>
    </ligand>
</feature>
<feature type="binding site" evidence="1">
    <location>
        <position position="214"/>
    </location>
    <ligand>
        <name>K(+)</name>
        <dbReference type="ChEBI" id="CHEBI:29103"/>
        <label>3</label>
    </ligand>
</feature>
<feature type="binding site" evidence="1">
    <location>
        <position position="215"/>
    </location>
    <ligand>
        <name>K(+)</name>
        <dbReference type="ChEBI" id="CHEBI:29103"/>
        <label>3</label>
    </ligand>
</feature>
<feature type="disulfide bond" description="Interchain (with C-60)" evidence="1">
    <location>
        <position position="60"/>
    </location>
</feature>
<proteinExistence type="evidence at protein level"/>
<organism>
    <name type="scientific">Mus musculus</name>
    <name type="common">Mouse</name>
    <dbReference type="NCBI Taxonomy" id="10090"/>
    <lineage>
        <taxon>Eukaryota</taxon>
        <taxon>Metazoa</taxon>
        <taxon>Chordata</taxon>
        <taxon>Craniata</taxon>
        <taxon>Vertebrata</taxon>
        <taxon>Euteleostomi</taxon>
        <taxon>Mammalia</taxon>
        <taxon>Eutheria</taxon>
        <taxon>Euarchontoglires</taxon>
        <taxon>Glires</taxon>
        <taxon>Rodentia</taxon>
        <taxon>Myomorpha</taxon>
        <taxon>Muroidea</taxon>
        <taxon>Muridae</taxon>
        <taxon>Murinae</taxon>
        <taxon>Mus</taxon>
        <taxon>Mus</taxon>
    </lineage>
</organism>
<keyword id="KW-1003">Cell membrane</keyword>
<keyword id="KW-1015">Disulfide bond</keyword>
<keyword id="KW-0256">Endoplasmic reticulum</keyword>
<keyword id="KW-0407">Ion channel</keyword>
<keyword id="KW-0406">Ion transport</keyword>
<keyword id="KW-0472">Membrane</keyword>
<keyword id="KW-0479">Metal-binding</keyword>
<keyword id="KW-0496">Mitochondrion</keyword>
<keyword id="KW-0999">Mitochondrion inner membrane</keyword>
<keyword id="KW-0630">Potassium</keyword>
<keyword id="KW-0631">Potassium channel</keyword>
<keyword id="KW-0633">Potassium transport</keyword>
<keyword id="KW-1185">Reference proteome</keyword>
<keyword id="KW-0812">Transmembrane</keyword>
<keyword id="KW-1133">Transmembrane helix</keyword>
<keyword id="KW-0813">Transport</keyword>